<keyword id="KW-1185">Reference proteome</keyword>
<keyword id="KW-0687">Ribonucleoprotein</keyword>
<keyword id="KW-0689">Ribosomal protein</keyword>
<accession>A7NR40</accession>
<proteinExistence type="inferred from homology"/>
<comment type="similarity">
    <text evidence="1">Belongs to the bacterial ribosomal protein bL36 family.</text>
</comment>
<gene>
    <name evidence="1" type="primary">rpmJ</name>
    <name type="ordered locus">Rcas_4003</name>
</gene>
<dbReference type="EMBL" id="CP000804">
    <property type="protein sequence ID" value="ABU60036.1"/>
    <property type="molecule type" value="Genomic_DNA"/>
</dbReference>
<dbReference type="RefSeq" id="WP_012122459.1">
    <property type="nucleotide sequence ID" value="NC_009767.1"/>
</dbReference>
<dbReference type="SMR" id="A7NR40"/>
<dbReference type="STRING" id="383372.Rcas_4003"/>
<dbReference type="KEGG" id="rca:Rcas_4003"/>
<dbReference type="eggNOG" id="COG0257">
    <property type="taxonomic scope" value="Bacteria"/>
</dbReference>
<dbReference type="HOGENOM" id="CLU_135723_6_2_0"/>
<dbReference type="OrthoDB" id="9802520at2"/>
<dbReference type="Proteomes" id="UP000000263">
    <property type="component" value="Chromosome"/>
</dbReference>
<dbReference type="GO" id="GO:0005737">
    <property type="term" value="C:cytoplasm"/>
    <property type="evidence" value="ECO:0007669"/>
    <property type="project" value="UniProtKB-ARBA"/>
</dbReference>
<dbReference type="GO" id="GO:1990904">
    <property type="term" value="C:ribonucleoprotein complex"/>
    <property type="evidence" value="ECO:0007669"/>
    <property type="project" value="UniProtKB-KW"/>
</dbReference>
<dbReference type="GO" id="GO:0005840">
    <property type="term" value="C:ribosome"/>
    <property type="evidence" value="ECO:0007669"/>
    <property type="project" value="UniProtKB-KW"/>
</dbReference>
<dbReference type="GO" id="GO:0003735">
    <property type="term" value="F:structural constituent of ribosome"/>
    <property type="evidence" value="ECO:0007669"/>
    <property type="project" value="InterPro"/>
</dbReference>
<dbReference type="GO" id="GO:0006412">
    <property type="term" value="P:translation"/>
    <property type="evidence" value="ECO:0007669"/>
    <property type="project" value="UniProtKB-UniRule"/>
</dbReference>
<dbReference type="HAMAP" id="MF_00251">
    <property type="entry name" value="Ribosomal_bL36"/>
    <property type="match status" value="1"/>
</dbReference>
<dbReference type="InterPro" id="IPR000473">
    <property type="entry name" value="Ribosomal_bL36"/>
</dbReference>
<dbReference type="InterPro" id="IPR035977">
    <property type="entry name" value="Ribosomal_bL36_sp"/>
</dbReference>
<dbReference type="NCBIfam" id="TIGR01022">
    <property type="entry name" value="rpmJ_bact"/>
    <property type="match status" value="1"/>
</dbReference>
<dbReference type="PANTHER" id="PTHR42888">
    <property type="entry name" value="50S RIBOSOMAL PROTEIN L36, CHLOROPLASTIC"/>
    <property type="match status" value="1"/>
</dbReference>
<dbReference type="PANTHER" id="PTHR42888:SF1">
    <property type="entry name" value="LARGE RIBOSOMAL SUBUNIT PROTEIN BL36C"/>
    <property type="match status" value="1"/>
</dbReference>
<dbReference type="Pfam" id="PF00444">
    <property type="entry name" value="Ribosomal_L36"/>
    <property type="match status" value="1"/>
</dbReference>
<dbReference type="SUPFAM" id="SSF57840">
    <property type="entry name" value="Ribosomal protein L36"/>
    <property type="match status" value="1"/>
</dbReference>
<dbReference type="PROSITE" id="PS00828">
    <property type="entry name" value="RIBOSOMAL_L36"/>
    <property type="match status" value="1"/>
</dbReference>
<evidence type="ECO:0000255" key="1">
    <source>
        <dbReference type="HAMAP-Rule" id="MF_00251"/>
    </source>
</evidence>
<evidence type="ECO:0000305" key="2"/>
<feature type="chain" id="PRO_1000078482" description="Large ribosomal subunit protein bL36">
    <location>
        <begin position="1"/>
        <end position="38"/>
    </location>
</feature>
<protein>
    <recommendedName>
        <fullName evidence="1">Large ribosomal subunit protein bL36</fullName>
    </recommendedName>
    <alternativeName>
        <fullName evidence="2">50S ribosomal protein L36</fullName>
    </alternativeName>
</protein>
<organism>
    <name type="scientific">Roseiflexus castenholzii (strain DSM 13941 / HLO8)</name>
    <dbReference type="NCBI Taxonomy" id="383372"/>
    <lineage>
        <taxon>Bacteria</taxon>
        <taxon>Bacillati</taxon>
        <taxon>Chloroflexota</taxon>
        <taxon>Chloroflexia</taxon>
        <taxon>Chloroflexales</taxon>
        <taxon>Roseiflexineae</taxon>
        <taxon>Roseiflexaceae</taxon>
        <taxon>Roseiflexus</taxon>
    </lineage>
</organism>
<sequence length="38" mass="4495">MKVQASVKPRCEYCRVIKRKGVLRVICSRQPKHKQRQG</sequence>
<name>RL36_ROSCS</name>
<reference key="1">
    <citation type="submission" date="2007-08" db="EMBL/GenBank/DDBJ databases">
        <title>Complete sequence of Roseiflexus castenholzii DSM 13941.</title>
        <authorList>
            <consortium name="US DOE Joint Genome Institute"/>
            <person name="Copeland A."/>
            <person name="Lucas S."/>
            <person name="Lapidus A."/>
            <person name="Barry K."/>
            <person name="Glavina del Rio T."/>
            <person name="Dalin E."/>
            <person name="Tice H."/>
            <person name="Pitluck S."/>
            <person name="Thompson L.S."/>
            <person name="Brettin T."/>
            <person name="Bruce D."/>
            <person name="Detter J.C."/>
            <person name="Han C."/>
            <person name="Tapia R."/>
            <person name="Schmutz J."/>
            <person name="Larimer F."/>
            <person name="Land M."/>
            <person name="Hauser L."/>
            <person name="Kyrpides N."/>
            <person name="Mikhailova N."/>
            <person name="Bryant D.A."/>
            <person name="Hanada S."/>
            <person name="Tsukatani Y."/>
            <person name="Richardson P."/>
        </authorList>
    </citation>
    <scope>NUCLEOTIDE SEQUENCE [LARGE SCALE GENOMIC DNA]</scope>
    <source>
        <strain>DSM 13941 / HLO8</strain>
    </source>
</reference>